<protein>
    <recommendedName>
        <fullName evidence="1">tRNA(Ile)-lysidine synthase</fullName>
        <ecNumber evidence="1">6.3.4.19</ecNumber>
    </recommendedName>
    <alternativeName>
        <fullName evidence="1">tRNA(Ile)-2-lysyl-cytidine synthase</fullName>
    </alternativeName>
    <alternativeName>
        <fullName evidence="1">tRNA(Ile)-lysidine synthetase</fullName>
    </alternativeName>
</protein>
<comment type="function">
    <text evidence="1">Ligates lysine onto the cytidine present at position 34 of the AUA codon-specific tRNA(Ile) that contains the anticodon CAU, in an ATP-dependent manner. Cytidine is converted to lysidine, thus changing the amino acid specificity of the tRNA from methionine to isoleucine.</text>
</comment>
<comment type="catalytic activity">
    <reaction evidence="1">
        <text>cytidine(34) in tRNA(Ile2) + L-lysine + ATP = lysidine(34) in tRNA(Ile2) + AMP + diphosphate + H(+)</text>
        <dbReference type="Rhea" id="RHEA:43744"/>
        <dbReference type="Rhea" id="RHEA-COMP:10625"/>
        <dbReference type="Rhea" id="RHEA-COMP:10670"/>
        <dbReference type="ChEBI" id="CHEBI:15378"/>
        <dbReference type="ChEBI" id="CHEBI:30616"/>
        <dbReference type="ChEBI" id="CHEBI:32551"/>
        <dbReference type="ChEBI" id="CHEBI:33019"/>
        <dbReference type="ChEBI" id="CHEBI:82748"/>
        <dbReference type="ChEBI" id="CHEBI:83665"/>
        <dbReference type="ChEBI" id="CHEBI:456215"/>
        <dbReference type="EC" id="6.3.4.19"/>
    </reaction>
</comment>
<comment type="subcellular location">
    <subcellularLocation>
        <location evidence="1">Cytoplasm</location>
    </subcellularLocation>
</comment>
<comment type="domain">
    <text>The N-terminal region contains the highly conserved SGGXDS motif, predicted to be a P-loop motif involved in ATP binding.</text>
</comment>
<comment type="similarity">
    <text evidence="1">Belongs to the tRNA(Ile)-lysidine synthase family.</text>
</comment>
<reference key="1">
    <citation type="journal article" date="2003" name="Proc. Natl. Acad. Sci. U.S.A.">
        <title>Complete genome sequence and analysis of Wolinella succinogenes.</title>
        <authorList>
            <person name="Baar C."/>
            <person name="Eppinger M."/>
            <person name="Raddatz G."/>
            <person name="Simon J."/>
            <person name="Lanz C."/>
            <person name="Klimmek O."/>
            <person name="Nandakumar R."/>
            <person name="Gross R."/>
            <person name="Rosinus A."/>
            <person name="Keller H."/>
            <person name="Jagtap P."/>
            <person name="Linke B."/>
            <person name="Meyer F."/>
            <person name="Lederer H."/>
            <person name="Schuster S.C."/>
        </authorList>
    </citation>
    <scope>NUCLEOTIDE SEQUENCE [LARGE SCALE GENOMIC DNA]</scope>
    <source>
        <strain>ATCC 29543 / DSM 1740 / CCUG 13145 / JCM 31913 / LMG 7466 / NCTC 11488 / FDC 602W</strain>
    </source>
</reference>
<reference key="2">
    <citation type="journal article" date="2000" name="J. Bacteriol.">
        <title>Transport of C4-dicarboxylates in Wolinella succinogenes.</title>
        <authorList>
            <person name="Ullmann R."/>
            <person name="Gross R."/>
            <person name="Simon J."/>
            <person name="Unden G."/>
            <person name="Kroeger A."/>
        </authorList>
    </citation>
    <scope>NUCLEOTIDE SEQUENCE [GENOMIC DNA] OF 1-210</scope>
</reference>
<gene>
    <name evidence="1" type="primary">tilS</name>
    <name type="ordered locus">WS1770</name>
</gene>
<dbReference type="EC" id="6.3.4.19" evidence="1"/>
<dbReference type="EMBL" id="BX571661">
    <property type="protein sequence ID" value="CAE10792.1"/>
    <property type="molecule type" value="Genomic_DNA"/>
</dbReference>
<dbReference type="EMBL" id="AJ131242">
    <property type="protein sequence ID" value="CAA10333.1"/>
    <property type="molecule type" value="Genomic_DNA"/>
</dbReference>
<dbReference type="RefSeq" id="WP_011139575.1">
    <property type="nucleotide sequence ID" value="NC_005090.1"/>
</dbReference>
<dbReference type="SMR" id="Q7MR31"/>
<dbReference type="STRING" id="273121.WS1770"/>
<dbReference type="KEGG" id="wsu:WS1770"/>
<dbReference type="eggNOG" id="COG0037">
    <property type="taxonomic scope" value="Bacteria"/>
</dbReference>
<dbReference type="HOGENOM" id="CLU_053500_0_0_7"/>
<dbReference type="Proteomes" id="UP000000422">
    <property type="component" value="Chromosome"/>
</dbReference>
<dbReference type="GO" id="GO:0005737">
    <property type="term" value="C:cytoplasm"/>
    <property type="evidence" value="ECO:0007669"/>
    <property type="project" value="UniProtKB-SubCell"/>
</dbReference>
<dbReference type="GO" id="GO:0005524">
    <property type="term" value="F:ATP binding"/>
    <property type="evidence" value="ECO:0007669"/>
    <property type="project" value="UniProtKB-UniRule"/>
</dbReference>
<dbReference type="GO" id="GO:0032267">
    <property type="term" value="F:tRNA(Ile)-lysidine synthase activity"/>
    <property type="evidence" value="ECO:0007669"/>
    <property type="project" value="UniProtKB-EC"/>
</dbReference>
<dbReference type="GO" id="GO:0006400">
    <property type="term" value="P:tRNA modification"/>
    <property type="evidence" value="ECO:0007669"/>
    <property type="project" value="UniProtKB-UniRule"/>
</dbReference>
<dbReference type="CDD" id="cd01992">
    <property type="entry name" value="TilS_N"/>
    <property type="match status" value="1"/>
</dbReference>
<dbReference type="Gene3D" id="3.40.50.620">
    <property type="entry name" value="HUPs"/>
    <property type="match status" value="1"/>
</dbReference>
<dbReference type="HAMAP" id="MF_01161">
    <property type="entry name" value="tRNA_Ile_lys_synt"/>
    <property type="match status" value="1"/>
</dbReference>
<dbReference type="InterPro" id="IPR014729">
    <property type="entry name" value="Rossmann-like_a/b/a_fold"/>
</dbReference>
<dbReference type="InterPro" id="IPR011063">
    <property type="entry name" value="TilS/TtcA_N"/>
</dbReference>
<dbReference type="InterPro" id="IPR012094">
    <property type="entry name" value="tRNA_Ile_lys_synt"/>
</dbReference>
<dbReference type="InterPro" id="IPR012795">
    <property type="entry name" value="tRNA_Ile_lys_synt_N"/>
</dbReference>
<dbReference type="NCBIfam" id="TIGR02432">
    <property type="entry name" value="lysidine_TilS_N"/>
    <property type="match status" value="1"/>
</dbReference>
<dbReference type="PANTHER" id="PTHR43033">
    <property type="entry name" value="TRNA(ILE)-LYSIDINE SYNTHASE-RELATED"/>
    <property type="match status" value="1"/>
</dbReference>
<dbReference type="PANTHER" id="PTHR43033:SF1">
    <property type="entry name" value="TRNA(ILE)-LYSIDINE SYNTHASE-RELATED"/>
    <property type="match status" value="1"/>
</dbReference>
<dbReference type="Pfam" id="PF01171">
    <property type="entry name" value="ATP_bind_3"/>
    <property type="match status" value="1"/>
</dbReference>
<dbReference type="SUPFAM" id="SSF52402">
    <property type="entry name" value="Adenine nucleotide alpha hydrolases-like"/>
    <property type="match status" value="1"/>
</dbReference>
<feature type="chain" id="PRO_0000181806" description="tRNA(Ile)-lysidine synthase">
    <location>
        <begin position="1"/>
        <end position="326"/>
    </location>
</feature>
<feature type="binding site" evidence="1">
    <location>
        <begin position="23"/>
        <end position="28"/>
    </location>
    <ligand>
        <name>ATP</name>
        <dbReference type="ChEBI" id="CHEBI:30616"/>
    </ligand>
</feature>
<feature type="sequence conflict" description="In Ref. 2; CAA10333." evidence="2" ref="2">
    <original>K</original>
    <variation>Q</variation>
    <location>
        <position position="197"/>
    </location>
</feature>
<accession>Q7MR31</accession>
<accession>Q9ZEN6</accession>
<evidence type="ECO:0000255" key="1">
    <source>
        <dbReference type="HAMAP-Rule" id="MF_01161"/>
    </source>
</evidence>
<evidence type="ECO:0000305" key="2"/>
<sequence length="326" mass="38155">MGKIIQLQEEERLRQGKNLLGFSGGVDSTALFFLLLEREIPFDIALVNYHQRAQAKEEESYAKELAHRHQKRCFTLSCPLGPSNFEHQARLERYRFFESLIHQEGYARLLLAHHLGDRLEWLLMRLAQGSSLSTLLGFSSREIRLGYELIRPLGEITKEALYDYLHQHQIRYFEDESNRDPKPLRNRFRPLSETLLKEHAQGLLQSFRFLQEEREILYGEDPRIRRDSLFYFPSQERETQNLHLIDLSLKALGYVMSQGERQELLKSGFCVVLKGKVAIGRSERGIFIAPFERVIIPKAQRERLRIAKIPPKVRPYCFMAGIDSLL</sequence>
<keyword id="KW-0067">ATP-binding</keyword>
<keyword id="KW-0963">Cytoplasm</keyword>
<keyword id="KW-0436">Ligase</keyword>
<keyword id="KW-0547">Nucleotide-binding</keyword>
<keyword id="KW-1185">Reference proteome</keyword>
<keyword id="KW-0819">tRNA processing</keyword>
<organism>
    <name type="scientific">Wolinella succinogenes (strain ATCC 29543 / DSM 1740 / CCUG 13145 / JCM 31913 / LMG 7466 / NCTC 11488 / FDC 602W)</name>
    <name type="common">Vibrio succinogenes</name>
    <dbReference type="NCBI Taxonomy" id="273121"/>
    <lineage>
        <taxon>Bacteria</taxon>
        <taxon>Pseudomonadati</taxon>
        <taxon>Campylobacterota</taxon>
        <taxon>Epsilonproteobacteria</taxon>
        <taxon>Campylobacterales</taxon>
        <taxon>Helicobacteraceae</taxon>
        <taxon>Wolinella</taxon>
    </lineage>
</organism>
<name>TILS_WOLSU</name>
<proteinExistence type="inferred from homology"/>